<gene>
    <name evidence="1" type="primary">psb30</name>
    <name evidence="1" type="synonym">ycf12</name>
</gene>
<accession>P31559</accession>
<geneLocation type="chloroplast"/>
<organism>
    <name type="scientific">Euglena gracilis</name>
    <dbReference type="NCBI Taxonomy" id="3039"/>
    <lineage>
        <taxon>Eukaryota</taxon>
        <taxon>Discoba</taxon>
        <taxon>Euglenozoa</taxon>
        <taxon>Euglenida</taxon>
        <taxon>Spirocuta</taxon>
        <taxon>Euglenophyceae</taxon>
        <taxon>Euglenales</taxon>
        <taxon>Euglenaceae</taxon>
        <taxon>Euglena</taxon>
    </lineage>
</organism>
<feature type="chain" id="PRO_0000059021" description="Photosystem II reaction center protein Psb30">
    <location>
        <begin position="1"/>
        <end position="33"/>
    </location>
</feature>
<feature type="transmembrane region" description="Helical" evidence="1">
    <location>
        <begin position="7"/>
        <end position="27"/>
    </location>
</feature>
<proteinExistence type="inferred from homology"/>
<name>PSB30_EUGGR</name>
<dbReference type="EMBL" id="Z11874">
    <property type="status" value="NOT_ANNOTATED_CDS"/>
    <property type="molecule type" value="Genomic_DNA"/>
</dbReference>
<dbReference type="EMBL" id="X70810">
    <property type="protein sequence ID" value="CAA50084.1"/>
    <property type="molecule type" value="Genomic_DNA"/>
</dbReference>
<dbReference type="PIR" id="S34505">
    <property type="entry name" value="S34505"/>
</dbReference>
<dbReference type="RefSeq" id="NP_041897.1">
    <property type="nucleotide sequence ID" value="NC_001603.2"/>
</dbReference>
<dbReference type="SMR" id="P31559"/>
<dbReference type="GeneID" id="807505"/>
<dbReference type="GO" id="GO:0009535">
    <property type="term" value="C:chloroplast thylakoid membrane"/>
    <property type="evidence" value="ECO:0007669"/>
    <property type="project" value="UniProtKB-SubCell"/>
</dbReference>
<dbReference type="GO" id="GO:0009523">
    <property type="term" value="C:photosystem II"/>
    <property type="evidence" value="ECO:0007669"/>
    <property type="project" value="UniProtKB-KW"/>
</dbReference>
<dbReference type="GO" id="GO:0015979">
    <property type="term" value="P:photosynthesis"/>
    <property type="evidence" value="ECO:0007669"/>
    <property type="project" value="UniProtKB-KW"/>
</dbReference>
<dbReference type="HAMAP" id="MF_01329">
    <property type="entry name" value="PSII_Psb30_Ycf12"/>
    <property type="match status" value="1"/>
</dbReference>
<dbReference type="InterPro" id="IPR010284">
    <property type="entry name" value="PSII_Ycf12_core-subunit"/>
</dbReference>
<dbReference type="NCBIfam" id="NF010239">
    <property type="entry name" value="PRK13686.1"/>
    <property type="match status" value="1"/>
</dbReference>
<dbReference type="Pfam" id="PF05969">
    <property type="entry name" value="PSII_Ycf12"/>
    <property type="match status" value="1"/>
</dbReference>
<keyword id="KW-0150">Chloroplast</keyword>
<keyword id="KW-0472">Membrane</keyword>
<keyword id="KW-0602">Photosynthesis</keyword>
<keyword id="KW-0604">Photosystem II</keyword>
<keyword id="KW-0934">Plastid</keyword>
<keyword id="KW-0793">Thylakoid</keyword>
<keyword id="KW-0812">Transmembrane</keyword>
<keyword id="KW-1133">Transmembrane helix</keyword>
<reference key="1">
    <citation type="journal article" date="1993" name="Nucleic Acids Res.">
        <title>Complete sequence of Euglena gracilis chloroplast DNA.</title>
        <authorList>
            <person name="Hallick R.B."/>
            <person name="Hong L."/>
            <person name="Drager R.G."/>
            <person name="Favreau M.R."/>
            <person name="Monfort A."/>
            <person name="Orsat B."/>
            <person name="Spielmann A."/>
            <person name="Stutz E."/>
        </authorList>
    </citation>
    <scope>NUCLEOTIDE SEQUENCE [LARGE SCALE GENOMIC DNA]</scope>
    <source>
        <strain>Z / UTEX 753</strain>
    </source>
</reference>
<protein>
    <recommendedName>
        <fullName evidence="1">Photosystem II reaction center protein Psb30</fullName>
    </recommendedName>
    <alternativeName>
        <fullName evidence="1">Photosystem II reaction center protein Ycf12</fullName>
    </alternativeName>
</protein>
<evidence type="ECO:0000255" key="1">
    <source>
        <dbReference type="HAMAP-Rule" id="MF_01329"/>
    </source>
</evidence>
<evidence type="ECO:0000305" key="2"/>
<comment type="function">
    <text evidence="1">A core subunit of photosystem II (PSII), probably helps stabilize the reaction center.</text>
</comment>
<comment type="subunit">
    <text evidence="2">PSII is composed of 1 copy each of membrane proteins PsbA, PsbB, PsbC, PsbD, PsbE, PsbF, PsbH, PsbI, PsbJ, PsbK, PsbL, PsbM, PsbT, PsbY, PsbZ, Psb30/Ycf12, peripheral proteins of the oxygen-evolving complex and a large number of cofactors. It forms dimeric complexes.</text>
</comment>
<comment type="subcellular location">
    <subcellularLocation>
        <location evidence="1">Plastid</location>
        <location evidence="1">Chloroplast thylakoid membrane</location>
        <topology evidence="1">Single-pass membrane protein</topology>
    </subcellularLocation>
</comment>
<comment type="similarity">
    <text evidence="1">Belongs to the Psb30/Ycf12 family.</text>
</comment>
<sequence length="33" mass="3566">MNSELLIQLGSLTLITLTGPLIIGIIFIRKGNL</sequence>